<accession>Q2G955</accession>
<protein>
    <recommendedName>
        <fullName evidence="1">3-isopropylmalate dehydratase small subunit</fullName>
        <ecNumber evidence="1">4.2.1.33</ecNumber>
    </recommendedName>
    <alternativeName>
        <fullName evidence="1">Alpha-IPM isomerase</fullName>
        <shortName evidence="1">IPMI</shortName>
    </alternativeName>
    <alternativeName>
        <fullName evidence="1">Isopropylmalate isomerase</fullName>
    </alternativeName>
</protein>
<name>LEUD_NOVAD</name>
<proteinExistence type="inferred from homology"/>
<reference key="1">
    <citation type="submission" date="2006-01" db="EMBL/GenBank/DDBJ databases">
        <title>Complete sequence of Novosphingobium aromaticivorans DSM 12444.</title>
        <authorList>
            <consortium name="US DOE Joint Genome Institute"/>
            <person name="Copeland A."/>
            <person name="Lucas S."/>
            <person name="Lapidus A."/>
            <person name="Barry K."/>
            <person name="Detter J.C."/>
            <person name="Glavina T."/>
            <person name="Hammon N."/>
            <person name="Israni S."/>
            <person name="Pitluck S."/>
            <person name="Chain P."/>
            <person name="Malfatti S."/>
            <person name="Shin M."/>
            <person name="Vergez L."/>
            <person name="Schmutz J."/>
            <person name="Larimer F."/>
            <person name="Land M."/>
            <person name="Kyrpides N."/>
            <person name="Ivanova N."/>
            <person name="Fredrickson J."/>
            <person name="Balkwill D."/>
            <person name="Romine M.F."/>
            <person name="Richardson P."/>
        </authorList>
    </citation>
    <scope>NUCLEOTIDE SEQUENCE [LARGE SCALE GENOMIC DNA]</scope>
    <source>
        <strain>ATCC 700278 / DSM 12444 / CCUG 56034 / CIP 105152 / NBRC 16084 / F199</strain>
    </source>
</reference>
<evidence type="ECO:0000255" key="1">
    <source>
        <dbReference type="HAMAP-Rule" id="MF_01031"/>
    </source>
</evidence>
<comment type="function">
    <text evidence="1">Catalyzes the isomerization between 2-isopropylmalate and 3-isopropylmalate, via the formation of 2-isopropylmaleate.</text>
</comment>
<comment type="catalytic activity">
    <reaction evidence="1">
        <text>(2R,3S)-3-isopropylmalate = (2S)-2-isopropylmalate</text>
        <dbReference type="Rhea" id="RHEA:32287"/>
        <dbReference type="ChEBI" id="CHEBI:1178"/>
        <dbReference type="ChEBI" id="CHEBI:35121"/>
        <dbReference type="EC" id="4.2.1.33"/>
    </reaction>
</comment>
<comment type="pathway">
    <text evidence="1">Amino-acid biosynthesis; L-leucine biosynthesis; L-leucine from 3-methyl-2-oxobutanoate: step 2/4.</text>
</comment>
<comment type="subunit">
    <text evidence="1">Heterodimer of LeuC and LeuD.</text>
</comment>
<comment type="similarity">
    <text evidence="1">Belongs to the LeuD family. LeuD type 1 subfamily.</text>
</comment>
<gene>
    <name evidence="1" type="primary">leuD</name>
    <name type="ordered locus">Saro_1173</name>
</gene>
<keyword id="KW-0028">Amino-acid biosynthesis</keyword>
<keyword id="KW-0100">Branched-chain amino acid biosynthesis</keyword>
<keyword id="KW-0432">Leucine biosynthesis</keyword>
<keyword id="KW-0456">Lyase</keyword>
<keyword id="KW-1185">Reference proteome</keyword>
<organism>
    <name type="scientific">Novosphingobium aromaticivorans (strain ATCC 700278 / DSM 12444 / CCUG 56034 / CIP 105152 / NBRC 16084 / F199)</name>
    <dbReference type="NCBI Taxonomy" id="279238"/>
    <lineage>
        <taxon>Bacteria</taxon>
        <taxon>Pseudomonadati</taxon>
        <taxon>Pseudomonadota</taxon>
        <taxon>Alphaproteobacteria</taxon>
        <taxon>Sphingomonadales</taxon>
        <taxon>Sphingomonadaceae</taxon>
        <taxon>Novosphingobium</taxon>
    </lineage>
</organism>
<sequence>MEPVKQIEGRAIPFGRKNVDTDVIIPARWLKTITRQGLGRGAFEALRADPDNIFDSAEFAGSPILIAGDNFGCGSSREHAAWALLDMGVKAVIAPSFSDIFSGNAFKNGILTVVLPQEAIDRLMEVAQTDPVSIDLEAQTVTTPFQDRFSFEIDPFRKHCLANGLDEVGLTMARGDAIATHEARMRESLPFLAKGTDAVAAA</sequence>
<dbReference type="EC" id="4.2.1.33" evidence="1"/>
<dbReference type="EMBL" id="CP000248">
    <property type="protein sequence ID" value="ABD25618.1"/>
    <property type="molecule type" value="Genomic_DNA"/>
</dbReference>
<dbReference type="RefSeq" id="WP_011444832.1">
    <property type="nucleotide sequence ID" value="NC_007794.1"/>
</dbReference>
<dbReference type="SMR" id="Q2G955"/>
<dbReference type="STRING" id="279238.Saro_1173"/>
<dbReference type="KEGG" id="nar:Saro_1173"/>
<dbReference type="eggNOG" id="COG0066">
    <property type="taxonomic scope" value="Bacteria"/>
</dbReference>
<dbReference type="HOGENOM" id="CLU_081378_0_3_5"/>
<dbReference type="UniPathway" id="UPA00048">
    <property type="reaction ID" value="UER00071"/>
</dbReference>
<dbReference type="Proteomes" id="UP000009134">
    <property type="component" value="Chromosome"/>
</dbReference>
<dbReference type="GO" id="GO:0009316">
    <property type="term" value="C:3-isopropylmalate dehydratase complex"/>
    <property type="evidence" value="ECO:0007669"/>
    <property type="project" value="InterPro"/>
</dbReference>
<dbReference type="GO" id="GO:0003861">
    <property type="term" value="F:3-isopropylmalate dehydratase activity"/>
    <property type="evidence" value="ECO:0007669"/>
    <property type="project" value="UniProtKB-UniRule"/>
</dbReference>
<dbReference type="GO" id="GO:0009098">
    <property type="term" value="P:L-leucine biosynthetic process"/>
    <property type="evidence" value="ECO:0007669"/>
    <property type="project" value="UniProtKB-UniRule"/>
</dbReference>
<dbReference type="CDD" id="cd01577">
    <property type="entry name" value="IPMI_Swivel"/>
    <property type="match status" value="1"/>
</dbReference>
<dbReference type="FunFam" id="3.20.19.10:FF:000003">
    <property type="entry name" value="3-isopropylmalate dehydratase small subunit"/>
    <property type="match status" value="1"/>
</dbReference>
<dbReference type="Gene3D" id="3.20.19.10">
    <property type="entry name" value="Aconitase, domain 4"/>
    <property type="match status" value="1"/>
</dbReference>
<dbReference type="HAMAP" id="MF_01031">
    <property type="entry name" value="LeuD_type1"/>
    <property type="match status" value="1"/>
</dbReference>
<dbReference type="InterPro" id="IPR004431">
    <property type="entry name" value="3-IsopropMal_deHydase_ssu"/>
</dbReference>
<dbReference type="InterPro" id="IPR015928">
    <property type="entry name" value="Aconitase/3IPM_dehydase_swvl"/>
</dbReference>
<dbReference type="InterPro" id="IPR000573">
    <property type="entry name" value="AconitaseA/IPMdHydase_ssu_swvl"/>
</dbReference>
<dbReference type="InterPro" id="IPR033940">
    <property type="entry name" value="IPMI_Swivel"/>
</dbReference>
<dbReference type="InterPro" id="IPR050075">
    <property type="entry name" value="LeuD"/>
</dbReference>
<dbReference type="NCBIfam" id="TIGR00171">
    <property type="entry name" value="leuD"/>
    <property type="match status" value="1"/>
</dbReference>
<dbReference type="NCBIfam" id="NF002458">
    <property type="entry name" value="PRK01641.1"/>
    <property type="match status" value="1"/>
</dbReference>
<dbReference type="PANTHER" id="PTHR43345:SF5">
    <property type="entry name" value="3-ISOPROPYLMALATE DEHYDRATASE SMALL SUBUNIT"/>
    <property type="match status" value="1"/>
</dbReference>
<dbReference type="PANTHER" id="PTHR43345">
    <property type="entry name" value="3-ISOPROPYLMALATE DEHYDRATASE SMALL SUBUNIT 2-RELATED-RELATED"/>
    <property type="match status" value="1"/>
</dbReference>
<dbReference type="Pfam" id="PF00694">
    <property type="entry name" value="Aconitase_C"/>
    <property type="match status" value="1"/>
</dbReference>
<dbReference type="SUPFAM" id="SSF52016">
    <property type="entry name" value="LeuD/IlvD-like"/>
    <property type="match status" value="1"/>
</dbReference>
<feature type="chain" id="PRO_1000063799" description="3-isopropylmalate dehydratase small subunit">
    <location>
        <begin position="1"/>
        <end position="202"/>
    </location>
</feature>